<proteinExistence type="inferred from homology"/>
<accession>P0DMS3</accession>
<reference key="1">
    <citation type="submission" date="2012-05" db="EMBL/GenBank/DDBJ databases">
        <authorList>
            <person name="Di Palma F."/>
            <person name="Alfoldi J."/>
            <person name="Johnson J."/>
            <person name="Berlin A."/>
            <person name="Gnerre S."/>
            <person name="Jaffe D."/>
            <person name="MacCallum I."/>
            <person name="Young S."/>
            <person name="Walker B.J."/>
            <person name="Lindblad-Toh K."/>
        </authorList>
    </citation>
    <scope>NUCLEOTIDE SEQUENCE [LARGE SCALE GENOMIC DNA]</scope>
</reference>
<reference key="2">
    <citation type="unpublished observations" date="2014-12">
        <authorList>
            <person name="Puppione D.L."/>
        </authorList>
    </citation>
    <scope>IDENTIFICATION</scope>
</reference>
<organism>
    <name type="scientific">Jaculus jaculus</name>
    <name type="common">Lesser Egyptian jerboa</name>
    <dbReference type="NCBI Taxonomy" id="51337"/>
    <lineage>
        <taxon>Eukaryota</taxon>
        <taxon>Metazoa</taxon>
        <taxon>Chordata</taxon>
        <taxon>Craniata</taxon>
        <taxon>Vertebrata</taxon>
        <taxon>Euteleostomi</taxon>
        <taxon>Mammalia</taxon>
        <taxon>Eutheria</taxon>
        <taxon>Euarchontoglires</taxon>
        <taxon>Glires</taxon>
        <taxon>Rodentia</taxon>
        <taxon>Myomorpha</taxon>
        <taxon>Dipodoidea</taxon>
        <taxon>Dipodidae</taxon>
        <taxon>Dipodinae</taxon>
        <taxon>Jaculus</taxon>
    </lineage>
</organism>
<protein>
    <recommendedName>
        <fullName>Apolipoprotein A-I</fullName>
        <shortName>Apo-AI</shortName>
        <shortName>ApoA-I</shortName>
    </recommendedName>
    <alternativeName>
        <fullName>Apolipoprotein A1</fullName>
    </alternativeName>
    <component>
        <recommendedName>
            <fullName>Proapolipoprotein A-I</fullName>
            <shortName>ProapoA-I</shortName>
        </recommendedName>
    </component>
    <component>
        <recommendedName>
            <fullName>Truncated apolipoprotein A-I</fullName>
        </recommendedName>
    </component>
</protein>
<feature type="signal peptide" evidence="6">
    <location>
        <begin position="1"/>
        <end position="18"/>
    </location>
</feature>
<feature type="chain" id="PRO_0000432001" description="Proapolipoprotein A-I">
    <location>
        <begin position="19"/>
        <end position="264"/>
    </location>
</feature>
<feature type="chain" id="PRO_0000432002" description="Apolipoprotein A-I">
    <location>
        <begin position="25"/>
        <end position="264"/>
    </location>
</feature>
<feature type="chain" id="PRO_0000432003" description="Truncated apolipoprotein A-I" evidence="3">
    <location>
        <begin position="25"/>
        <end position="263"/>
    </location>
</feature>
<feature type="repeat" description="1">
    <location>
        <begin position="67"/>
        <end position="88"/>
    </location>
</feature>
<feature type="repeat" description="2">
    <location>
        <begin position="89"/>
        <end position="110"/>
    </location>
</feature>
<feature type="repeat" description="3; half-length">
    <location>
        <begin position="111"/>
        <end position="121"/>
    </location>
</feature>
<feature type="repeat" description="4">
    <location>
        <begin position="122"/>
        <end position="143"/>
    </location>
</feature>
<feature type="repeat" description="5">
    <location>
        <begin position="144"/>
        <end position="165"/>
    </location>
</feature>
<feature type="repeat" description="6">
    <location>
        <begin position="166"/>
        <end position="187"/>
    </location>
</feature>
<feature type="repeat" description="7">
    <location>
        <begin position="188"/>
        <end position="207"/>
    </location>
</feature>
<feature type="repeat" description="8">
    <location>
        <begin position="208"/>
        <end position="229"/>
    </location>
</feature>
<feature type="repeat" description="9; half-length">
    <location>
        <begin position="230"/>
        <end position="240"/>
    </location>
</feature>
<feature type="repeat" description="10">
    <location>
        <begin position="241"/>
        <end position="264"/>
    </location>
</feature>
<feature type="region of interest" description="10 X approximate tandem repeats">
    <location>
        <begin position="67"/>
        <end position="264"/>
    </location>
</feature>
<feature type="modified residue" description="Methionine sulfoxide" evidence="3">
    <location>
        <position position="109"/>
    </location>
</feature>
<keyword id="KW-0153">Cholesterol metabolism</keyword>
<keyword id="KW-0325">Glycoprotein</keyword>
<keyword id="KW-0345">HDL</keyword>
<keyword id="KW-0443">Lipid metabolism</keyword>
<keyword id="KW-0445">Lipid transport</keyword>
<keyword id="KW-0449">Lipoprotein</keyword>
<keyword id="KW-0558">Oxidation</keyword>
<keyword id="KW-0564">Palmitate</keyword>
<keyword id="KW-0597">Phosphoprotein</keyword>
<keyword id="KW-1185">Reference proteome</keyword>
<keyword id="KW-0677">Repeat</keyword>
<keyword id="KW-0964">Secreted</keyword>
<keyword id="KW-0732">Signal</keyword>
<keyword id="KW-0753">Steroid metabolism</keyword>
<keyword id="KW-1207">Sterol metabolism</keyword>
<keyword id="KW-0813">Transport</keyword>
<gene>
    <name type="primary">APOA1</name>
</gene>
<dbReference type="EMBL" id="AKZC01245818">
    <property type="status" value="NOT_ANNOTATED_CDS"/>
    <property type="molecule type" value="Genomic_DNA"/>
</dbReference>
<dbReference type="RefSeq" id="XP_004666497.1">
    <property type="nucleotide sequence ID" value="XM_004666440.1"/>
</dbReference>
<dbReference type="SMR" id="P0DMS3"/>
<dbReference type="Ensembl" id="ENSJJAT00000016478.1">
    <property type="protein sequence ID" value="ENSJJAP00000010024.1"/>
    <property type="gene ID" value="ENSJJAG00000013728.1"/>
</dbReference>
<dbReference type="GeneID" id="101616768"/>
<dbReference type="CTD" id="335"/>
<dbReference type="GeneTree" id="ENSGT00950000182929"/>
<dbReference type="OMA" id="EYVAQFE"/>
<dbReference type="OrthoDB" id="8727817at2759"/>
<dbReference type="Proteomes" id="UP000694385">
    <property type="component" value="Unassembled WGS sequence"/>
</dbReference>
<dbReference type="GO" id="GO:0042627">
    <property type="term" value="C:chylomicron"/>
    <property type="evidence" value="ECO:0007669"/>
    <property type="project" value="TreeGrafter"/>
</dbReference>
<dbReference type="GO" id="GO:0030139">
    <property type="term" value="C:endocytic vesicle"/>
    <property type="evidence" value="ECO:0007669"/>
    <property type="project" value="Ensembl"/>
</dbReference>
<dbReference type="GO" id="GO:1903561">
    <property type="term" value="C:extracellular vesicle"/>
    <property type="evidence" value="ECO:0007669"/>
    <property type="project" value="TreeGrafter"/>
</dbReference>
<dbReference type="GO" id="GO:0034362">
    <property type="term" value="C:low-density lipoprotein particle"/>
    <property type="evidence" value="ECO:0007669"/>
    <property type="project" value="TreeGrafter"/>
</dbReference>
<dbReference type="GO" id="GO:0034366">
    <property type="term" value="C:spherical high-density lipoprotein particle"/>
    <property type="evidence" value="ECO:0007669"/>
    <property type="project" value="Ensembl"/>
</dbReference>
<dbReference type="GO" id="GO:0034361">
    <property type="term" value="C:very-low-density lipoprotein particle"/>
    <property type="evidence" value="ECO:0007669"/>
    <property type="project" value="Ensembl"/>
</dbReference>
<dbReference type="GO" id="GO:0001540">
    <property type="term" value="F:amyloid-beta binding"/>
    <property type="evidence" value="ECO:0007669"/>
    <property type="project" value="Ensembl"/>
</dbReference>
<dbReference type="GO" id="GO:0034191">
    <property type="term" value="F:apolipoprotein A-I receptor binding"/>
    <property type="evidence" value="ECO:0007669"/>
    <property type="project" value="Ensembl"/>
</dbReference>
<dbReference type="GO" id="GO:0045499">
    <property type="term" value="F:chemorepellent activity"/>
    <property type="evidence" value="ECO:0007669"/>
    <property type="project" value="Ensembl"/>
</dbReference>
<dbReference type="GO" id="GO:0015485">
    <property type="term" value="F:cholesterol binding"/>
    <property type="evidence" value="ECO:0007669"/>
    <property type="project" value="Ensembl"/>
</dbReference>
<dbReference type="GO" id="GO:0120020">
    <property type="term" value="F:cholesterol transfer activity"/>
    <property type="evidence" value="ECO:0007669"/>
    <property type="project" value="Ensembl"/>
</dbReference>
<dbReference type="GO" id="GO:0019899">
    <property type="term" value="F:enzyme binding"/>
    <property type="evidence" value="ECO:0007669"/>
    <property type="project" value="Ensembl"/>
</dbReference>
<dbReference type="GO" id="GO:0031072">
    <property type="term" value="F:heat shock protein binding"/>
    <property type="evidence" value="ECO:0007669"/>
    <property type="project" value="Ensembl"/>
</dbReference>
<dbReference type="GO" id="GO:0008035">
    <property type="term" value="F:high-density lipoprotein particle binding"/>
    <property type="evidence" value="ECO:0007669"/>
    <property type="project" value="Ensembl"/>
</dbReference>
<dbReference type="GO" id="GO:0070653">
    <property type="term" value="F:high-density lipoprotein particle receptor binding"/>
    <property type="evidence" value="ECO:0007669"/>
    <property type="project" value="Ensembl"/>
</dbReference>
<dbReference type="GO" id="GO:0060228">
    <property type="term" value="F:phosphatidylcholine-sterol O-acyltransferase activator activity"/>
    <property type="evidence" value="ECO:0007669"/>
    <property type="project" value="Ensembl"/>
</dbReference>
<dbReference type="GO" id="GO:0005543">
    <property type="term" value="F:phospholipid binding"/>
    <property type="evidence" value="ECO:0007669"/>
    <property type="project" value="Ensembl"/>
</dbReference>
<dbReference type="GO" id="GO:0042803">
    <property type="term" value="F:protein homodimerization activity"/>
    <property type="evidence" value="ECO:0000250"/>
    <property type="project" value="UniProtKB"/>
</dbReference>
<dbReference type="GO" id="GO:0030325">
    <property type="term" value="P:adrenal gland development"/>
    <property type="evidence" value="ECO:0007669"/>
    <property type="project" value="Ensembl"/>
</dbReference>
<dbReference type="GO" id="GO:0034205">
    <property type="term" value="P:amyloid-beta formation"/>
    <property type="evidence" value="ECO:0007669"/>
    <property type="project" value="Ensembl"/>
</dbReference>
<dbReference type="GO" id="GO:0043534">
    <property type="term" value="P:blood vessel endothelial cell migration"/>
    <property type="evidence" value="ECO:0007669"/>
    <property type="project" value="Ensembl"/>
</dbReference>
<dbReference type="GO" id="GO:0071402">
    <property type="term" value="P:cellular response to lipoprotein particle stimulus"/>
    <property type="evidence" value="ECO:0007669"/>
    <property type="project" value="Ensembl"/>
</dbReference>
<dbReference type="GO" id="GO:0006695">
    <property type="term" value="P:cholesterol biosynthetic process"/>
    <property type="evidence" value="ECO:0007669"/>
    <property type="project" value="Ensembl"/>
</dbReference>
<dbReference type="GO" id="GO:0033344">
    <property type="term" value="P:cholesterol efflux"/>
    <property type="evidence" value="ECO:0007669"/>
    <property type="project" value="Ensembl"/>
</dbReference>
<dbReference type="GO" id="GO:0042632">
    <property type="term" value="P:cholesterol homeostasis"/>
    <property type="evidence" value="ECO:0007669"/>
    <property type="project" value="Ensembl"/>
</dbReference>
<dbReference type="GO" id="GO:0070508">
    <property type="term" value="P:cholesterol import"/>
    <property type="evidence" value="ECO:0007669"/>
    <property type="project" value="Ensembl"/>
</dbReference>
<dbReference type="GO" id="GO:0001935">
    <property type="term" value="P:endothelial cell proliferation"/>
    <property type="evidence" value="ECO:0007669"/>
    <property type="project" value="Ensembl"/>
</dbReference>
<dbReference type="GO" id="GO:0007186">
    <property type="term" value="P:G protein-coupled receptor signaling pathway"/>
    <property type="evidence" value="ECO:0007669"/>
    <property type="project" value="Ensembl"/>
</dbReference>
<dbReference type="GO" id="GO:0008211">
    <property type="term" value="P:glucocorticoid metabolic process"/>
    <property type="evidence" value="ECO:0007669"/>
    <property type="project" value="Ensembl"/>
</dbReference>
<dbReference type="GO" id="GO:0034380">
    <property type="term" value="P:high-density lipoprotein particle assembly"/>
    <property type="evidence" value="ECO:0007669"/>
    <property type="project" value="Ensembl"/>
</dbReference>
<dbReference type="GO" id="GO:0034375">
    <property type="term" value="P:high-density lipoprotein particle remodeling"/>
    <property type="evidence" value="ECO:0007669"/>
    <property type="project" value="Ensembl"/>
</dbReference>
<dbReference type="GO" id="GO:0007229">
    <property type="term" value="P:integrin-mediated signaling pathway"/>
    <property type="evidence" value="ECO:0007669"/>
    <property type="project" value="Ensembl"/>
</dbReference>
<dbReference type="GO" id="GO:0019915">
    <property type="term" value="P:lipid storage"/>
    <property type="evidence" value="ECO:0007669"/>
    <property type="project" value="Ensembl"/>
</dbReference>
<dbReference type="GO" id="GO:0042158">
    <property type="term" value="P:lipoprotein biosynthetic process"/>
    <property type="evidence" value="ECO:0007669"/>
    <property type="project" value="Ensembl"/>
</dbReference>
<dbReference type="GO" id="GO:0060354">
    <property type="term" value="P:negative regulation of cell adhesion molecule production"/>
    <property type="evidence" value="ECO:0007669"/>
    <property type="project" value="Ensembl"/>
</dbReference>
<dbReference type="GO" id="GO:0002719">
    <property type="term" value="P:negative regulation of cytokine production involved in immune response"/>
    <property type="evidence" value="ECO:0007669"/>
    <property type="project" value="Ensembl"/>
</dbReference>
<dbReference type="GO" id="GO:0034115">
    <property type="term" value="P:negative regulation of heterotypic cell-cell adhesion"/>
    <property type="evidence" value="ECO:0007669"/>
    <property type="project" value="Ensembl"/>
</dbReference>
<dbReference type="GO" id="GO:0050728">
    <property type="term" value="P:negative regulation of inflammatory response"/>
    <property type="evidence" value="ECO:0007669"/>
    <property type="project" value="Ensembl"/>
</dbReference>
<dbReference type="GO" id="GO:0032691">
    <property type="term" value="P:negative regulation of interleukin-1 beta production"/>
    <property type="evidence" value="ECO:0007669"/>
    <property type="project" value="Ensembl"/>
</dbReference>
<dbReference type="GO" id="GO:0010804">
    <property type="term" value="P:negative regulation of tumor necrosis factor-mediated signaling pathway"/>
    <property type="evidence" value="ECO:0007669"/>
    <property type="project" value="Ensembl"/>
</dbReference>
<dbReference type="GO" id="GO:0010903">
    <property type="term" value="P:negative regulation of very-low-density lipoprotein particle remodeling"/>
    <property type="evidence" value="ECO:0007669"/>
    <property type="project" value="Ensembl"/>
</dbReference>
<dbReference type="GO" id="GO:0006656">
    <property type="term" value="P:phosphatidylcholine biosynthetic process"/>
    <property type="evidence" value="ECO:0007669"/>
    <property type="project" value="Ensembl"/>
</dbReference>
<dbReference type="GO" id="GO:0033700">
    <property type="term" value="P:phospholipid efflux"/>
    <property type="evidence" value="ECO:0007669"/>
    <property type="project" value="Ensembl"/>
</dbReference>
<dbReference type="GO" id="GO:0055091">
    <property type="term" value="P:phospholipid homeostasis"/>
    <property type="evidence" value="ECO:0007669"/>
    <property type="project" value="Ensembl"/>
</dbReference>
<dbReference type="GO" id="GO:0010875">
    <property type="term" value="P:positive regulation of cholesterol efflux"/>
    <property type="evidence" value="ECO:0000250"/>
    <property type="project" value="UniProtKB"/>
</dbReference>
<dbReference type="GO" id="GO:0090205">
    <property type="term" value="P:positive regulation of cholesterol metabolic process"/>
    <property type="evidence" value="ECO:0007669"/>
    <property type="project" value="Ensembl"/>
</dbReference>
<dbReference type="GO" id="GO:0050766">
    <property type="term" value="P:positive regulation of phagocytosis"/>
    <property type="evidence" value="ECO:0000250"/>
    <property type="project" value="UniProtKB"/>
</dbReference>
<dbReference type="GO" id="GO:1902995">
    <property type="term" value="P:positive regulation of phospholipid efflux"/>
    <property type="evidence" value="ECO:0000250"/>
    <property type="project" value="UniProtKB"/>
</dbReference>
<dbReference type="GO" id="GO:0035025">
    <property type="term" value="P:positive regulation of Rho protein signal transduction"/>
    <property type="evidence" value="ECO:0007669"/>
    <property type="project" value="Ensembl"/>
</dbReference>
<dbReference type="GO" id="GO:0051496">
    <property type="term" value="P:positive regulation of stress fiber assembly"/>
    <property type="evidence" value="ECO:0007669"/>
    <property type="project" value="Ensembl"/>
</dbReference>
<dbReference type="GO" id="GO:1900026">
    <property type="term" value="P:positive regulation of substrate adhesion-dependent cell spreading"/>
    <property type="evidence" value="ECO:0007669"/>
    <property type="project" value="Ensembl"/>
</dbReference>
<dbReference type="GO" id="GO:0050821">
    <property type="term" value="P:protein stabilization"/>
    <property type="evidence" value="ECO:0000250"/>
    <property type="project" value="UniProtKB"/>
</dbReference>
<dbReference type="GO" id="GO:0032489">
    <property type="term" value="P:regulation of Cdc42 protein signal transduction"/>
    <property type="evidence" value="ECO:0007669"/>
    <property type="project" value="Ensembl"/>
</dbReference>
<dbReference type="GO" id="GO:0030300">
    <property type="term" value="P:regulation of intestinal cholesterol absorption"/>
    <property type="evidence" value="ECO:0007669"/>
    <property type="project" value="Ensembl"/>
</dbReference>
<dbReference type="GO" id="GO:0043691">
    <property type="term" value="P:reverse cholesterol transport"/>
    <property type="evidence" value="ECO:0007669"/>
    <property type="project" value="Ensembl"/>
</dbReference>
<dbReference type="GO" id="GO:0070328">
    <property type="term" value="P:triglyceride homeostasis"/>
    <property type="evidence" value="ECO:0007669"/>
    <property type="project" value="Ensembl"/>
</dbReference>
<dbReference type="GO" id="GO:0051180">
    <property type="term" value="P:vitamin transport"/>
    <property type="evidence" value="ECO:0007669"/>
    <property type="project" value="Ensembl"/>
</dbReference>
<dbReference type="FunFam" id="1.20.120.20:FF:000001">
    <property type="entry name" value="Apolipoprotein A-I"/>
    <property type="match status" value="1"/>
</dbReference>
<dbReference type="FunFam" id="1.20.5.20:FF:000001">
    <property type="entry name" value="apolipoprotein A-I"/>
    <property type="match status" value="1"/>
</dbReference>
<dbReference type="Gene3D" id="1.20.5.20">
    <property type="match status" value="1"/>
</dbReference>
<dbReference type="Gene3D" id="6.10.140.380">
    <property type="match status" value="1"/>
</dbReference>
<dbReference type="Gene3D" id="1.20.120.20">
    <property type="entry name" value="Apolipoprotein"/>
    <property type="match status" value="1"/>
</dbReference>
<dbReference type="InterPro" id="IPR000074">
    <property type="entry name" value="ApoA_E"/>
</dbReference>
<dbReference type="InterPro" id="IPR050163">
    <property type="entry name" value="Apolipoprotein_A1/A4/E"/>
</dbReference>
<dbReference type="PANTHER" id="PTHR18976">
    <property type="entry name" value="APOLIPOPROTEIN"/>
    <property type="match status" value="1"/>
</dbReference>
<dbReference type="PANTHER" id="PTHR18976:SF11">
    <property type="entry name" value="APOLIPOPROTEIN A-I"/>
    <property type="match status" value="1"/>
</dbReference>
<dbReference type="Pfam" id="PF01442">
    <property type="entry name" value="Apolipoprotein"/>
    <property type="match status" value="1"/>
</dbReference>
<dbReference type="SUPFAM" id="SSF58113">
    <property type="entry name" value="Apolipoprotein A-I"/>
    <property type="match status" value="1"/>
</dbReference>
<sequence>MKAVVLALAVLFLTGSQARHFWQQDDPQSPWDRVKDFATVYVDAVKDSGRDYVSQFESSALGKQLNLHLLDNWDTLSNTVGRLREQLGPVTHEFWANLEKDTEWLRQEMNKDLEEVKVKVQPYLDDFQKKWQEEVERYREKVGPLGAELREGARQKLQELHEKLTPLGEDLRDRARVHVDALRTQLAPYSDQMRERLATRLAAIRDSPSLAVYHAKASEHLKTLSEKAKPALEDLRQGLMPVLENLKTTVLAAIDEASKKLNAQ</sequence>
<name>APOA1_JACJA</name>
<evidence type="ECO:0000250" key="1"/>
<evidence type="ECO:0000250" key="2">
    <source>
        <dbReference type="UniProtKB" id="G5BQH5"/>
    </source>
</evidence>
<evidence type="ECO:0000250" key="3">
    <source>
        <dbReference type="UniProtKB" id="P02647"/>
    </source>
</evidence>
<evidence type="ECO:0000250" key="4">
    <source>
        <dbReference type="UniProtKB" id="P02648"/>
    </source>
</evidence>
<evidence type="ECO:0000250" key="5">
    <source>
        <dbReference type="UniProtKB" id="P04639"/>
    </source>
</evidence>
<evidence type="ECO:0000255" key="6"/>
<evidence type="ECO:0000305" key="7"/>
<comment type="function">
    <text evidence="3">Participates in the reverse transport of cholesterol from tissues to the liver for excretion by promoting cholesterol efflux from tissues and by acting as a cofactor for the lecithin cholesterol acyltransferase (LCAT). As part of the SPAP complex, activates spermatozoa motility.</text>
</comment>
<comment type="subunit">
    <text evidence="2 3 5">Homodimer (By similarity). Interacts with APOA1BP and CLU. Component of a sperm activating protein complex (SPAP), consisting of APOA1, an immunoglobulin heavy chain, an immunoglobulin light chain and albumin. Interacts with NDRG1. Interacts with SCGB3A2 (By similarity). Interacts with NAXE and YJEFN3 (By similarity).</text>
</comment>
<comment type="subcellular location">
    <subcellularLocation>
        <location evidence="3">Secreted</location>
    </subcellularLocation>
</comment>
<comment type="PTM">
    <text evidence="4">Glycosylated.</text>
</comment>
<comment type="PTM">
    <text evidence="4">Palmitoylated.</text>
</comment>
<comment type="PTM">
    <text evidence="1">Phosphorylation sites are present in the extracellular medium.</text>
</comment>
<comment type="similarity">
    <text evidence="7">Belongs to the apolipoprotein A1/A4/E family.</text>
</comment>